<sequence>MYETRDLTGNAGKPVDTNPWPNNSKIAVSFVVNYEEGGERSLLYEDEGFETFLTEAGLMPFPNRPVRERSIESCFEYGSRCGFWRILNLFKKHKVPFTCWAIGQAVEKNPVVVGAMEEAGCEVGSHSHRWINYEGVPPETEYEHIKKSVQAIQKASPSNSAPRSWYTGRASLNTRKLVCQVYKDLGLPQPFDSDEYNDDYPYWVADPLASKPGAEDDKGLLIVPYTLEVNDMKYAVAPGFCNSDDFYTYARDAFDVLYEEGLEGAPKMMTIGLHCRLTGRPGRFRGLQKLMEHITSKEGVWVATREQIAQAWSAKHPYKA</sequence>
<reference key="1">
    <citation type="journal article" date="2002" name="Nature">
        <title>The genome sequence of Schizosaccharomyces pombe.</title>
        <authorList>
            <person name="Wood V."/>
            <person name="Gwilliam R."/>
            <person name="Rajandream M.A."/>
            <person name="Lyne M.H."/>
            <person name="Lyne R."/>
            <person name="Stewart A."/>
            <person name="Sgouros J.G."/>
            <person name="Peat N."/>
            <person name="Hayles J."/>
            <person name="Baker S.G."/>
            <person name="Basham D."/>
            <person name="Bowman S."/>
            <person name="Brooks K."/>
            <person name="Brown D."/>
            <person name="Brown S."/>
            <person name="Chillingworth T."/>
            <person name="Churcher C.M."/>
            <person name="Collins M."/>
            <person name="Connor R."/>
            <person name="Cronin A."/>
            <person name="Davis P."/>
            <person name="Feltwell T."/>
            <person name="Fraser A."/>
            <person name="Gentles S."/>
            <person name="Goble A."/>
            <person name="Hamlin N."/>
            <person name="Harris D.E."/>
            <person name="Hidalgo J."/>
            <person name="Hodgson G."/>
            <person name="Holroyd S."/>
            <person name="Hornsby T."/>
            <person name="Howarth S."/>
            <person name="Huckle E.J."/>
            <person name="Hunt S."/>
            <person name="Jagels K."/>
            <person name="James K.D."/>
            <person name="Jones L."/>
            <person name="Jones M."/>
            <person name="Leather S."/>
            <person name="McDonald S."/>
            <person name="McLean J."/>
            <person name="Mooney P."/>
            <person name="Moule S."/>
            <person name="Mungall K.L."/>
            <person name="Murphy L.D."/>
            <person name="Niblett D."/>
            <person name="Odell C."/>
            <person name="Oliver K."/>
            <person name="O'Neil S."/>
            <person name="Pearson D."/>
            <person name="Quail M.A."/>
            <person name="Rabbinowitsch E."/>
            <person name="Rutherford K.M."/>
            <person name="Rutter S."/>
            <person name="Saunders D."/>
            <person name="Seeger K."/>
            <person name="Sharp S."/>
            <person name="Skelton J."/>
            <person name="Simmonds M.N."/>
            <person name="Squares R."/>
            <person name="Squares S."/>
            <person name="Stevens K."/>
            <person name="Taylor K."/>
            <person name="Taylor R.G."/>
            <person name="Tivey A."/>
            <person name="Walsh S.V."/>
            <person name="Warren T."/>
            <person name="Whitehead S."/>
            <person name="Woodward J.R."/>
            <person name="Volckaert G."/>
            <person name="Aert R."/>
            <person name="Robben J."/>
            <person name="Grymonprez B."/>
            <person name="Weltjens I."/>
            <person name="Vanstreels E."/>
            <person name="Rieger M."/>
            <person name="Schaefer M."/>
            <person name="Mueller-Auer S."/>
            <person name="Gabel C."/>
            <person name="Fuchs M."/>
            <person name="Duesterhoeft A."/>
            <person name="Fritzc C."/>
            <person name="Holzer E."/>
            <person name="Moestl D."/>
            <person name="Hilbert H."/>
            <person name="Borzym K."/>
            <person name="Langer I."/>
            <person name="Beck A."/>
            <person name="Lehrach H."/>
            <person name="Reinhardt R."/>
            <person name="Pohl T.M."/>
            <person name="Eger P."/>
            <person name="Zimmermann W."/>
            <person name="Wedler H."/>
            <person name="Wambutt R."/>
            <person name="Purnelle B."/>
            <person name="Goffeau A."/>
            <person name="Cadieu E."/>
            <person name="Dreano S."/>
            <person name="Gloux S."/>
            <person name="Lelaure V."/>
            <person name="Mottier S."/>
            <person name="Galibert F."/>
            <person name="Aves S.J."/>
            <person name="Xiang Z."/>
            <person name="Hunt C."/>
            <person name="Moore K."/>
            <person name="Hurst S.M."/>
            <person name="Lucas M."/>
            <person name="Rochet M."/>
            <person name="Gaillardin C."/>
            <person name="Tallada V.A."/>
            <person name="Garzon A."/>
            <person name="Thode G."/>
            <person name="Daga R.R."/>
            <person name="Cruzado L."/>
            <person name="Jimenez J."/>
            <person name="Sanchez M."/>
            <person name="del Rey F."/>
            <person name="Benito J."/>
            <person name="Dominguez A."/>
            <person name="Revuelta J.L."/>
            <person name="Moreno S."/>
            <person name="Armstrong J."/>
            <person name="Forsburg S.L."/>
            <person name="Cerutti L."/>
            <person name="Lowe T."/>
            <person name="McCombie W.R."/>
            <person name="Paulsen I."/>
            <person name="Potashkin J."/>
            <person name="Shpakovski G.V."/>
            <person name="Ussery D."/>
            <person name="Barrell B.G."/>
            <person name="Nurse P."/>
        </authorList>
    </citation>
    <scope>NUCLEOTIDE SEQUENCE [LARGE SCALE GENOMIC DNA]</scope>
    <source>
        <strain>972 / ATCC 24843</strain>
    </source>
</reference>
<reference key="2">
    <citation type="journal article" date="2005" name="FEBS Lett.">
        <title>cda1+, encoding chitin deacetylase is required for proper spore formation in Schizosaccharomyces pombe.</title>
        <authorList>
            <person name="Matsuo Y."/>
            <person name="Tanaka K."/>
            <person name="Matsuda H."/>
            <person name="Kawamukai M."/>
        </authorList>
    </citation>
    <scope>FUNCTION</scope>
    <scope>SUBUNIT</scope>
    <scope>SUBCELLULAR LOCATION</scope>
    <scope>DEVELOPMENTAL STAGE</scope>
</reference>
<evidence type="ECO:0000255" key="1">
    <source>
        <dbReference type="PROSITE-ProRule" id="PRU01014"/>
    </source>
</evidence>
<evidence type="ECO:0000269" key="2">
    <source>
    </source>
</evidence>
<evidence type="ECO:0000303" key="3">
    <source>
    </source>
</evidence>
<evidence type="ECO:0000305" key="4"/>
<evidence type="ECO:0000305" key="5">
    <source>
    </source>
</evidence>
<proteinExistence type="evidence at protein level"/>
<name>CDA1_SCHPO</name>
<keyword id="KW-0961">Cell wall biogenesis/degradation</keyword>
<keyword id="KW-0147">Chitin-binding</keyword>
<keyword id="KW-0378">Hydrolase</keyword>
<keyword id="KW-0479">Metal-binding</keyword>
<keyword id="KW-1185">Reference proteome</keyword>
<keyword id="KW-0749">Sporulation</keyword>
<accession>O13842</accession>
<protein>
    <recommendedName>
        <fullName evidence="4">Putative polysaccharide deacetylase</fullName>
        <ecNumber evidence="4">3.-.-.-</ecNumber>
    </recommendedName>
    <alternativeName>
        <fullName evidence="3">Chitin deacetylase 1</fullName>
    </alternativeName>
</protein>
<feature type="chain" id="PRO_0000172745" description="Putative polysaccharide deacetylase">
    <location>
        <begin position="1"/>
        <end position="320"/>
    </location>
</feature>
<feature type="domain" description="NodB homology" evidence="1">
    <location>
        <begin position="69"/>
        <end position="303"/>
    </location>
</feature>
<organism>
    <name type="scientific">Schizosaccharomyces pombe (strain 972 / ATCC 24843)</name>
    <name type="common">Fission yeast</name>
    <dbReference type="NCBI Taxonomy" id="284812"/>
    <lineage>
        <taxon>Eukaryota</taxon>
        <taxon>Fungi</taxon>
        <taxon>Dikarya</taxon>
        <taxon>Ascomycota</taxon>
        <taxon>Taphrinomycotina</taxon>
        <taxon>Schizosaccharomycetes</taxon>
        <taxon>Schizosaccharomycetales</taxon>
        <taxon>Schizosaccharomycetaceae</taxon>
        <taxon>Schizosaccharomyces</taxon>
    </lineage>
</organism>
<dbReference type="EC" id="3.-.-.-" evidence="4"/>
<dbReference type="EMBL" id="CU329670">
    <property type="protein sequence ID" value="CAB10114.1"/>
    <property type="molecule type" value="Genomic_DNA"/>
</dbReference>
<dbReference type="PIR" id="T37990">
    <property type="entry name" value="T37990"/>
</dbReference>
<dbReference type="RefSeq" id="NP_594418.1">
    <property type="nucleotide sequence ID" value="NM_001019847.2"/>
</dbReference>
<dbReference type="SMR" id="O13842"/>
<dbReference type="BioGRID" id="278697">
    <property type="interactions" value="10"/>
</dbReference>
<dbReference type="MINT" id="O13842"/>
<dbReference type="STRING" id="284812.O13842"/>
<dbReference type="PaxDb" id="4896-SPAC19G12.03.1"/>
<dbReference type="EnsemblFungi" id="SPAC19G12.03.1">
    <property type="protein sequence ID" value="SPAC19G12.03.1:pep"/>
    <property type="gene ID" value="SPAC19G12.03"/>
</dbReference>
<dbReference type="PomBase" id="SPAC19G12.03">
    <property type="gene designation" value="cda1"/>
</dbReference>
<dbReference type="VEuPathDB" id="FungiDB:SPAC19G12.03"/>
<dbReference type="eggNOG" id="ENOG502QQRF">
    <property type="taxonomic scope" value="Eukaryota"/>
</dbReference>
<dbReference type="HOGENOM" id="CLU_029940_0_0_1"/>
<dbReference type="InParanoid" id="O13842"/>
<dbReference type="OMA" id="ESCFEYG"/>
<dbReference type="PhylomeDB" id="O13842"/>
<dbReference type="BRENDA" id="3.5.1.41">
    <property type="organism ID" value="5613"/>
</dbReference>
<dbReference type="PRO" id="PR:O13842"/>
<dbReference type="Proteomes" id="UP000002485">
    <property type="component" value="Chromosome I"/>
</dbReference>
<dbReference type="GO" id="GO:0042764">
    <property type="term" value="C:ascospore-type prospore"/>
    <property type="evidence" value="ECO:0007669"/>
    <property type="project" value="UniProtKB-SubCell"/>
</dbReference>
<dbReference type="GO" id="GO:0005631">
    <property type="term" value="C:chitosan layer of spore wall"/>
    <property type="evidence" value="ECO:0000305"/>
    <property type="project" value="PomBase"/>
</dbReference>
<dbReference type="GO" id="GO:0005829">
    <property type="term" value="C:cytosol"/>
    <property type="evidence" value="ECO:0007005"/>
    <property type="project" value="PomBase"/>
</dbReference>
<dbReference type="GO" id="GO:0005634">
    <property type="term" value="C:nucleus"/>
    <property type="evidence" value="ECO:0007005"/>
    <property type="project" value="PomBase"/>
</dbReference>
<dbReference type="GO" id="GO:0008061">
    <property type="term" value="F:chitin binding"/>
    <property type="evidence" value="ECO:0007669"/>
    <property type="project" value="UniProtKB-KW"/>
</dbReference>
<dbReference type="GO" id="GO:0004099">
    <property type="term" value="F:chitin deacetylase activity"/>
    <property type="evidence" value="ECO:0000303"/>
    <property type="project" value="PomBase"/>
</dbReference>
<dbReference type="GO" id="GO:0042802">
    <property type="term" value="F:identical protein binding"/>
    <property type="evidence" value="ECO:0000353"/>
    <property type="project" value="IntAct"/>
</dbReference>
<dbReference type="GO" id="GO:0046872">
    <property type="term" value="F:metal ion binding"/>
    <property type="evidence" value="ECO:0007669"/>
    <property type="project" value="UniProtKB-KW"/>
</dbReference>
<dbReference type="GO" id="GO:0030476">
    <property type="term" value="P:ascospore wall assembly"/>
    <property type="evidence" value="ECO:0000315"/>
    <property type="project" value="PomBase"/>
</dbReference>
<dbReference type="GO" id="GO:0005975">
    <property type="term" value="P:carbohydrate metabolic process"/>
    <property type="evidence" value="ECO:0007669"/>
    <property type="project" value="InterPro"/>
</dbReference>
<dbReference type="CDD" id="cd10980">
    <property type="entry name" value="CE4_SpCDA1"/>
    <property type="match status" value="1"/>
</dbReference>
<dbReference type="Gene3D" id="3.20.20.370">
    <property type="entry name" value="Glycoside hydrolase/deacetylase"/>
    <property type="match status" value="1"/>
</dbReference>
<dbReference type="InterPro" id="IPR011330">
    <property type="entry name" value="Glyco_hydro/deAcase_b/a-brl"/>
</dbReference>
<dbReference type="InterPro" id="IPR002509">
    <property type="entry name" value="NODB_dom"/>
</dbReference>
<dbReference type="PANTHER" id="PTHR43123">
    <property type="entry name" value="POLYSACCHARIDE DEACETYLASE-RELATED"/>
    <property type="match status" value="1"/>
</dbReference>
<dbReference type="PANTHER" id="PTHR43123:SF1">
    <property type="entry name" value="POLYSACCHARIDE DEACETYLASE-RELATED"/>
    <property type="match status" value="1"/>
</dbReference>
<dbReference type="Pfam" id="PF01522">
    <property type="entry name" value="Polysacc_deac_1"/>
    <property type="match status" value="1"/>
</dbReference>
<dbReference type="SUPFAM" id="SSF88713">
    <property type="entry name" value="Glycoside hydrolase/deacetylase"/>
    <property type="match status" value="1"/>
</dbReference>
<dbReference type="PROSITE" id="PS51677">
    <property type="entry name" value="NODB"/>
    <property type="match status" value="1"/>
</dbReference>
<gene>
    <name evidence="3" type="primary">cda1</name>
    <name type="ORF">SPAC19G12.03</name>
</gene>
<comment type="function">
    <text evidence="2 5">May deacetylate chitin (Probable). Required for spore formation (PubMed:15862318).</text>
</comment>
<comment type="subunit">
    <text evidence="2">Homodimer.</text>
</comment>
<comment type="interaction">
    <interactant intactId="EBI-7614717">
        <id>O13842</id>
    </interactant>
    <interactant intactId="EBI-7614717">
        <id>O13842</id>
        <label>cda1</label>
    </interactant>
    <organismsDiffer>false</organismsDiffer>
    <experiments>3</experiments>
</comment>
<comment type="subcellular location">
    <subcellularLocation>
        <location evidence="5">Prospore</location>
    </subcellularLocation>
</comment>
<comment type="developmental stage">
    <text evidence="2">Induced during sporulation.</text>
</comment>
<comment type="similarity">
    <text evidence="4">Belongs to the polysaccharide deacetylase family.</text>
</comment>
<comment type="caution">
    <text evidence="4">Has low sequence similarity to characterized chitin deacetylases with an apparent lack of conserved active sites and metal binding sites, making its function difficult to predict.</text>
</comment>